<keyword id="KW-1003">Cell membrane</keyword>
<keyword id="KW-0472">Membrane</keyword>
<keyword id="KW-0732">Signal</keyword>
<keyword id="KW-0812">Transmembrane</keyword>
<keyword id="KW-1133">Transmembrane helix</keyword>
<protein>
    <recommendedName>
        <fullName>Phosphoglycerate transport regulatory protein PgtC</fullName>
    </recommendedName>
</protein>
<evidence type="ECO:0000250" key="1"/>
<evidence type="ECO:0000255" key="2"/>
<evidence type="ECO:0000305" key="3"/>
<organism>
    <name type="scientific">Salmonella typhi</name>
    <dbReference type="NCBI Taxonomy" id="90370"/>
    <lineage>
        <taxon>Bacteria</taxon>
        <taxon>Pseudomonadati</taxon>
        <taxon>Pseudomonadota</taxon>
        <taxon>Gammaproteobacteria</taxon>
        <taxon>Enterobacterales</taxon>
        <taxon>Enterobacteriaceae</taxon>
        <taxon>Salmonella</taxon>
    </lineage>
</organism>
<feature type="signal peptide" evidence="2">
    <location>
        <begin position="1"/>
        <end position="24"/>
    </location>
</feature>
<feature type="chain" id="PRO_0000022044" description="Phosphoglycerate transport regulatory protein PgtC">
    <location>
        <begin position="25"/>
        <end position="397"/>
    </location>
</feature>
<feature type="transmembrane region" description="Helical" evidence="2">
    <location>
        <begin position="102"/>
        <end position="117"/>
    </location>
</feature>
<gene>
    <name type="primary">pgtC</name>
    <name type="ordered locus">STY2635</name>
    <name type="ordered locus">t0460</name>
</gene>
<dbReference type="EMBL" id="AL513382">
    <property type="protein sequence ID" value="CAD07635.1"/>
    <property type="molecule type" value="Genomic_DNA"/>
</dbReference>
<dbReference type="EMBL" id="AE014613">
    <property type="protein sequence ID" value="AAO68172.1"/>
    <property type="molecule type" value="Genomic_DNA"/>
</dbReference>
<dbReference type="RefSeq" id="NP_456940.1">
    <property type="nucleotide sequence ID" value="NC_003198.1"/>
</dbReference>
<dbReference type="RefSeq" id="WP_000467983.1">
    <property type="nucleotide sequence ID" value="NZ_WSUR01000045.1"/>
</dbReference>
<dbReference type="STRING" id="220341.gene:17586533"/>
<dbReference type="KEGG" id="stt:t0460"/>
<dbReference type="KEGG" id="sty:STY2635"/>
<dbReference type="PATRIC" id="fig|220341.7.peg.2668"/>
<dbReference type="eggNOG" id="COG1840">
    <property type="taxonomic scope" value="Bacteria"/>
</dbReference>
<dbReference type="HOGENOM" id="CLU_040513_1_0_6"/>
<dbReference type="OMA" id="IMWNTRY"/>
<dbReference type="OrthoDB" id="305758at2"/>
<dbReference type="Proteomes" id="UP000000541">
    <property type="component" value="Chromosome"/>
</dbReference>
<dbReference type="Proteomes" id="UP000002670">
    <property type="component" value="Chromosome"/>
</dbReference>
<dbReference type="GO" id="GO:0030288">
    <property type="term" value="C:outer membrane-bounded periplasmic space"/>
    <property type="evidence" value="ECO:0007669"/>
    <property type="project" value="TreeGrafter"/>
</dbReference>
<dbReference type="GO" id="GO:0005886">
    <property type="term" value="C:plasma membrane"/>
    <property type="evidence" value="ECO:0007669"/>
    <property type="project" value="UniProtKB-SubCell"/>
</dbReference>
<dbReference type="Gene3D" id="3.40.190.10">
    <property type="entry name" value="Periplasmic binding protein-like II"/>
    <property type="match status" value="2"/>
</dbReference>
<dbReference type="PANTHER" id="PTHR30006:SF25">
    <property type="entry name" value="PHOSPHOGLYCERATE TRANSPORT REGULATORY PROTEIN PGTC"/>
    <property type="match status" value="1"/>
</dbReference>
<dbReference type="PANTHER" id="PTHR30006">
    <property type="entry name" value="THIAMINE-BINDING PERIPLASMIC PROTEIN-RELATED"/>
    <property type="match status" value="1"/>
</dbReference>
<dbReference type="Pfam" id="PF13343">
    <property type="entry name" value="SBP_bac_6"/>
    <property type="match status" value="1"/>
</dbReference>
<dbReference type="SUPFAM" id="SSF53850">
    <property type="entry name" value="Periplasmic binding protein-like II"/>
    <property type="match status" value="1"/>
</dbReference>
<accession>P0A234</accession>
<accession>P37591</accession>
<name>PGTC_SALTI</name>
<proteinExistence type="inferred from homology"/>
<reference key="1">
    <citation type="journal article" date="2001" name="Nature">
        <title>Complete genome sequence of a multiple drug resistant Salmonella enterica serovar Typhi CT18.</title>
        <authorList>
            <person name="Parkhill J."/>
            <person name="Dougan G."/>
            <person name="James K.D."/>
            <person name="Thomson N.R."/>
            <person name="Pickard D."/>
            <person name="Wain J."/>
            <person name="Churcher C.M."/>
            <person name="Mungall K.L."/>
            <person name="Bentley S.D."/>
            <person name="Holden M.T.G."/>
            <person name="Sebaihia M."/>
            <person name="Baker S."/>
            <person name="Basham D."/>
            <person name="Brooks K."/>
            <person name="Chillingworth T."/>
            <person name="Connerton P."/>
            <person name="Cronin A."/>
            <person name="Davis P."/>
            <person name="Davies R.M."/>
            <person name="Dowd L."/>
            <person name="White N."/>
            <person name="Farrar J."/>
            <person name="Feltwell T."/>
            <person name="Hamlin N."/>
            <person name="Haque A."/>
            <person name="Hien T.T."/>
            <person name="Holroyd S."/>
            <person name="Jagels K."/>
            <person name="Krogh A."/>
            <person name="Larsen T.S."/>
            <person name="Leather S."/>
            <person name="Moule S."/>
            <person name="O'Gaora P."/>
            <person name="Parry C."/>
            <person name="Quail M.A."/>
            <person name="Rutherford K.M."/>
            <person name="Simmonds M."/>
            <person name="Skelton J."/>
            <person name="Stevens K."/>
            <person name="Whitehead S."/>
            <person name="Barrell B.G."/>
        </authorList>
    </citation>
    <scope>NUCLEOTIDE SEQUENCE [LARGE SCALE GENOMIC DNA]</scope>
    <source>
        <strain>CT18</strain>
    </source>
</reference>
<reference key="2">
    <citation type="journal article" date="2003" name="J. Bacteriol.">
        <title>Comparative genomics of Salmonella enterica serovar Typhi strains Ty2 and CT18.</title>
        <authorList>
            <person name="Deng W."/>
            <person name="Liou S.-R."/>
            <person name="Plunkett G. III"/>
            <person name="Mayhew G.F."/>
            <person name="Rose D.J."/>
            <person name="Burland V."/>
            <person name="Kodoyianni V."/>
            <person name="Schwartz D.C."/>
            <person name="Blattner F.R."/>
        </authorList>
    </citation>
    <scope>NUCLEOTIDE SEQUENCE [LARGE SCALE GENOMIC DNA]</scope>
    <source>
        <strain>ATCC 700931 / Ty2</strain>
    </source>
</reference>
<sequence>MFGSCQAYSRELVMATTFSPSATAWIIQRWQTEPGSVMIRTLNRTSGSLEQLLDTANAENVDLILTSSPMLLQHLQEHQKLALLDSAPAASQKLVPRSIRSTSVAVAVSGFGLLINRSALAARHLPPPADWQDMGLPSYQGALLMSSPSRSDTNHLMVESLLQQKGWTAGWATLLAISGNLVTISSRSFGVADKIKSGLGVAGPVIDNYANLLLNDPNLAFTYFPYSAVSPTYVAVLKNSRHADEARAFIHYLLSPKGQRILADANTGKYPVAPLSADNPRAAQQQRLMAQPPLNYRLILKRQQLVQRMFDTAISFRLAQLKDAWRALHSAETRLKRPLPEIRALLTSVPVDAASSEDETWLAQFDNKSFAEQKMMEWQIWFLNNQRLAIHKLEELK</sequence>
<comment type="function">
    <text evidence="1">Required for pgtP expression, it may act jointly with the PgtA/PgtB signaling proteins.</text>
</comment>
<comment type="subcellular location">
    <subcellularLocation>
        <location evidence="3">Cell membrane</location>
        <topology evidence="3">Single-pass membrane protein</topology>
    </subcellularLocation>
</comment>